<dbReference type="EC" id="2.7.7.6" evidence="1"/>
<dbReference type="EMBL" id="BA000018">
    <property type="protein sequence ID" value="BAB41732.1"/>
    <property type="molecule type" value="Genomic_DNA"/>
</dbReference>
<dbReference type="PIR" id="A89822">
    <property type="entry name" value="A89822"/>
</dbReference>
<dbReference type="SMR" id="P60285"/>
<dbReference type="EnsemblBacteria" id="BAB41732">
    <property type="protein sequence ID" value="BAB41732"/>
    <property type="gene ID" value="BAB41732"/>
</dbReference>
<dbReference type="KEGG" id="sau:SA0501"/>
<dbReference type="HOGENOM" id="CLU_000524_3_0_9"/>
<dbReference type="GO" id="GO:0000428">
    <property type="term" value="C:DNA-directed RNA polymerase complex"/>
    <property type="evidence" value="ECO:0007669"/>
    <property type="project" value="UniProtKB-KW"/>
</dbReference>
<dbReference type="GO" id="GO:0003677">
    <property type="term" value="F:DNA binding"/>
    <property type="evidence" value="ECO:0007669"/>
    <property type="project" value="UniProtKB-UniRule"/>
</dbReference>
<dbReference type="GO" id="GO:0003899">
    <property type="term" value="F:DNA-directed RNA polymerase activity"/>
    <property type="evidence" value="ECO:0007669"/>
    <property type="project" value="UniProtKB-UniRule"/>
</dbReference>
<dbReference type="GO" id="GO:0000287">
    <property type="term" value="F:magnesium ion binding"/>
    <property type="evidence" value="ECO:0007669"/>
    <property type="project" value="UniProtKB-UniRule"/>
</dbReference>
<dbReference type="GO" id="GO:0008270">
    <property type="term" value="F:zinc ion binding"/>
    <property type="evidence" value="ECO:0007669"/>
    <property type="project" value="UniProtKB-UniRule"/>
</dbReference>
<dbReference type="GO" id="GO:0006351">
    <property type="term" value="P:DNA-templated transcription"/>
    <property type="evidence" value="ECO:0007669"/>
    <property type="project" value="UniProtKB-UniRule"/>
</dbReference>
<dbReference type="CDD" id="cd02655">
    <property type="entry name" value="RNAP_beta'_C"/>
    <property type="match status" value="1"/>
</dbReference>
<dbReference type="CDD" id="cd01609">
    <property type="entry name" value="RNAP_beta'_N"/>
    <property type="match status" value="1"/>
</dbReference>
<dbReference type="FunFam" id="1.10.132.30:FF:000003">
    <property type="entry name" value="DNA-directed RNA polymerase subunit beta"/>
    <property type="match status" value="1"/>
</dbReference>
<dbReference type="FunFam" id="1.10.150.390:FF:000002">
    <property type="entry name" value="DNA-directed RNA polymerase subunit beta"/>
    <property type="match status" value="1"/>
</dbReference>
<dbReference type="FunFam" id="4.10.860.120:FF:000001">
    <property type="entry name" value="DNA-directed RNA polymerase subunit beta"/>
    <property type="match status" value="1"/>
</dbReference>
<dbReference type="Gene3D" id="1.10.132.30">
    <property type="match status" value="1"/>
</dbReference>
<dbReference type="Gene3D" id="1.10.150.390">
    <property type="match status" value="1"/>
</dbReference>
<dbReference type="Gene3D" id="1.10.1790.20">
    <property type="match status" value="1"/>
</dbReference>
<dbReference type="Gene3D" id="1.10.40.90">
    <property type="match status" value="1"/>
</dbReference>
<dbReference type="Gene3D" id="2.40.40.20">
    <property type="match status" value="1"/>
</dbReference>
<dbReference type="Gene3D" id="2.40.50.100">
    <property type="match status" value="1"/>
</dbReference>
<dbReference type="Gene3D" id="4.10.860.120">
    <property type="entry name" value="RNA polymerase II, clamp domain"/>
    <property type="match status" value="1"/>
</dbReference>
<dbReference type="Gene3D" id="1.10.274.100">
    <property type="entry name" value="RNA polymerase Rpb1, domain 3"/>
    <property type="match status" value="1"/>
</dbReference>
<dbReference type="HAMAP" id="MF_01322">
    <property type="entry name" value="RNApol_bact_RpoC"/>
    <property type="match status" value="1"/>
</dbReference>
<dbReference type="InterPro" id="IPR045867">
    <property type="entry name" value="DNA-dir_RpoC_beta_prime"/>
</dbReference>
<dbReference type="InterPro" id="IPR012754">
    <property type="entry name" value="DNA-dir_RpoC_beta_prime_bact"/>
</dbReference>
<dbReference type="InterPro" id="IPR000722">
    <property type="entry name" value="RNA_pol_asu"/>
</dbReference>
<dbReference type="InterPro" id="IPR006592">
    <property type="entry name" value="RNA_pol_N"/>
</dbReference>
<dbReference type="InterPro" id="IPR007080">
    <property type="entry name" value="RNA_pol_Rpb1_1"/>
</dbReference>
<dbReference type="InterPro" id="IPR007066">
    <property type="entry name" value="RNA_pol_Rpb1_3"/>
</dbReference>
<dbReference type="InterPro" id="IPR042102">
    <property type="entry name" value="RNA_pol_Rpb1_3_sf"/>
</dbReference>
<dbReference type="InterPro" id="IPR007083">
    <property type="entry name" value="RNA_pol_Rpb1_4"/>
</dbReference>
<dbReference type="InterPro" id="IPR007081">
    <property type="entry name" value="RNA_pol_Rpb1_5"/>
</dbReference>
<dbReference type="InterPro" id="IPR044893">
    <property type="entry name" value="RNA_pol_Rpb1_clamp_domain"/>
</dbReference>
<dbReference type="InterPro" id="IPR038120">
    <property type="entry name" value="Rpb1_funnel_sf"/>
</dbReference>
<dbReference type="NCBIfam" id="TIGR02386">
    <property type="entry name" value="rpoC_TIGR"/>
    <property type="match status" value="1"/>
</dbReference>
<dbReference type="PANTHER" id="PTHR19376">
    <property type="entry name" value="DNA-DIRECTED RNA POLYMERASE"/>
    <property type="match status" value="1"/>
</dbReference>
<dbReference type="PANTHER" id="PTHR19376:SF54">
    <property type="entry name" value="DNA-DIRECTED RNA POLYMERASE SUBUNIT BETA"/>
    <property type="match status" value="1"/>
</dbReference>
<dbReference type="Pfam" id="PF04997">
    <property type="entry name" value="RNA_pol_Rpb1_1"/>
    <property type="match status" value="1"/>
</dbReference>
<dbReference type="Pfam" id="PF00623">
    <property type="entry name" value="RNA_pol_Rpb1_2"/>
    <property type="match status" value="1"/>
</dbReference>
<dbReference type="Pfam" id="PF04983">
    <property type="entry name" value="RNA_pol_Rpb1_3"/>
    <property type="match status" value="1"/>
</dbReference>
<dbReference type="Pfam" id="PF05000">
    <property type="entry name" value="RNA_pol_Rpb1_4"/>
    <property type="match status" value="1"/>
</dbReference>
<dbReference type="Pfam" id="PF04998">
    <property type="entry name" value="RNA_pol_Rpb1_5"/>
    <property type="match status" value="1"/>
</dbReference>
<dbReference type="SMART" id="SM00663">
    <property type="entry name" value="RPOLA_N"/>
    <property type="match status" value="1"/>
</dbReference>
<dbReference type="SUPFAM" id="SSF64484">
    <property type="entry name" value="beta and beta-prime subunits of DNA dependent RNA-polymerase"/>
    <property type="match status" value="1"/>
</dbReference>
<feature type="chain" id="PRO_0000067794" description="DNA-directed RNA polymerase subunit beta'">
    <location>
        <begin position="1"/>
        <end position="1207"/>
    </location>
</feature>
<feature type="binding site" evidence="1">
    <location>
        <position position="60"/>
    </location>
    <ligand>
        <name>Zn(2+)</name>
        <dbReference type="ChEBI" id="CHEBI:29105"/>
        <label>1</label>
    </ligand>
</feature>
<feature type="binding site" evidence="1">
    <location>
        <position position="62"/>
    </location>
    <ligand>
        <name>Zn(2+)</name>
        <dbReference type="ChEBI" id="CHEBI:29105"/>
        <label>1</label>
    </ligand>
</feature>
<feature type="binding site" evidence="1">
    <location>
        <position position="75"/>
    </location>
    <ligand>
        <name>Zn(2+)</name>
        <dbReference type="ChEBI" id="CHEBI:29105"/>
        <label>1</label>
    </ligand>
</feature>
<feature type="binding site" evidence="1">
    <location>
        <position position="78"/>
    </location>
    <ligand>
        <name>Zn(2+)</name>
        <dbReference type="ChEBI" id="CHEBI:29105"/>
        <label>1</label>
    </ligand>
</feature>
<feature type="binding site" evidence="1">
    <location>
        <position position="449"/>
    </location>
    <ligand>
        <name>Mg(2+)</name>
        <dbReference type="ChEBI" id="CHEBI:18420"/>
    </ligand>
</feature>
<feature type="binding site" evidence="1">
    <location>
        <position position="451"/>
    </location>
    <ligand>
        <name>Mg(2+)</name>
        <dbReference type="ChEBI" id="CHEBI:18420"/>
    </ligand>
</feature>
<feature type="binding site" evidence="1">
    <location>
        <position position="453"/>
    </location>
    <ligand>
        <name>Mg(2+)</name>
        <dbReference type="ChEBI" id="CHEBI:18420"/>
    </ligand>
</feature>
<feature type="binding site" evidence="1">
    <location>
        <position position="822"/>
    </location>
    <ligand>
        <name>Zn(2+)</name>
        <dbReference type="ChEBI" id="CHEBI:29105"/>
        <label>2</label>
    </ligand>
</feature>
<feature type="binding site" evidence="1">
    <location>
        <position position="896"/>
    </location>
    <ligand>
        <name>Zn(2+)</name>
        <dbReference type="ChEBI" id="CHEBI:29105"/>
        <label>2</label>
    </ligand>
</feature>
<feature type="binding site" evidence="1">
    <location>
        <position position="903"/>
    </location>
    <ligand>
        <name>Zn(2+)</name>
        <dbReference type="ChEBI" id="CHEBI:29105"/>
        <label>2</label>
    </ligand>
</feature>
<feature type="binding site" evidence="1">
    <location>
        <position position="906"/>
    </location>
    <ligand>
        <name>Zn(2+)</name>
        <dbReference type="ChEBI" id="CHEBI:29105"/>
        <label>2</label>
    </ligand>
</feature>
<accession>P60285</accession>
<accession>Q99W64</accession>
<gene>
    <name evidence="1" type="primary">rpoC</name>
    <name type="ordered locus">SA0501</name>
</gene>
<organism>
    <name type="scientific">Staphylococcus aureus (strain N315)</name>
    <dbReference type="NCBI Taxonomy" id="158879"/>
    <lineage>
        <taxon>Bacteria</taxon>
        <taxon>Bacillati</taxon>
        <taxon>Bacillota</taxon>
        <taxon>Bacilli</taxon>
        <taxon>Bacillales</taxon>
        <taxon>Staphylococcaceae</taxon>
        <taxon>Staphylococcus</taxon>
    </lineage>
</organism>
<evidence type="ECO:0000255" key="1">
    <source>
        <dbReference type="HAMAP-Rule" id="MF_01322"/>
    </source>
</evidence>
<keyword id="KW-0240">DNA-directed RNA polymerase</keyword>
<keyword id="KW-0460">Magnesium</keyword>
<keyword id="KW-0479">Metal-binding</keyword>
<keyword id="KW-0548">Nucleotidyltransferase</keyword>
<keyword id="KW-0804">Transcription</keyword>
<keyword id="KW-0808">Transferase</keyword>
<keyword id="KW-0862">Zinc</keyword>
<sequence length="1207" mass="135409">MIDVNNFHYMKIGLASPEKIRSWSFGEVKKPETINYRTLKPEKDGLFCERIFGPTKDWECSCGKYKRVRYKGMVCDRCGVEVTKSKVRRERMGHIELAAPVSHIWYFKGIPSRMGLLLDMSPRALEEVIYFASYVVVDPGPTGLEKKTLLSEAEFRDYYDKYPGQFVAKMGAEGIKDLLEEIDLDEELKLLRDELESATGQRLTRAIKRLEVVESFRNSGNKPSWMILDVLPIIPPEIRPMVQLDGGRFATSDLNDLYRRVINRNNRLKRLLDLGAPGIIVQNEKRMLQEAVDALIDNGRRGRPVTGPGNRPLKSLSHMLKGKQGRFRQNLLGKRVDYSGRSVIAVGPSLKMYQCGLPKEMALELFKPFVMKELVQREIATNIKNAKSKIERMDDEVWDVLEEVIREHPVLLNRAPTLHRLGIQAFEPTLVEGRAIRLHPLVTTAYNADFDGDQMAVHVPLSKEAQAEARMLMLAAQNILNPKDGKPVVTPSQDMVLGNYYLTLERKDAVNTGAIFNNTNEVLKAYANGFVHLHTRIGVHASSFNNPTFTEEQNKKILATSVGKIIFNEIIPDSFAYINEPTQENLERKTPNRYFIDPTTLGEGGLKEYFENEELIEPFNKKFLGNIIAEVFNRFSITDTSMMLDRMKDLGFKFSSKAGITVGVADIVVLPDKQQILDEHEKLVDRITKQFNRGLITEEERYNAVVEIWTDAKDQIQGELMQSLDKTNPIFMMSDSGARGNASNFTQLAGMRGLMAAPSGKIIELPITSSFREGLTVLEYFISTHGARKGLADTALKTADSGYLTRRLVDVAQDVIVREEDCGTDRGLLVSDIKEGTEMIEPFIERIEGRYSKETIRHPETDEIIIRPDELITPEIAKKITDAGIEQMYIRSAFTCNARHGVCEKCYGKNLATGEKVEVGEAVGTIAAQSIGEPGTQLTMRTFHTGGVAGSDITQGLPRIQEIFEARNPKGQAVITEIEGVVEDIKLAKDRQQEIVVKGANETRSYLASGTSRIIVEIGQPVQRGEVLTEGSIEPKNYLSVAGLNATESYLLKEVQKVYRMQGVEIDDKHVEVMVRQMLRKVRIIEAGDTKLLPGSLVDIHNFTDANREAFKHRKRPATAKPVLLGITKASLETESFLSAASFQETTRVLTDAAIKGKRDDLLGLKENVIIGKLIPAGTGMRRYSDVKYEKTAKPVAEVESQTEVTE</sequence>
<name>RPOC_STAAN</name>
<proteinExistence type="evidence at protein level"/>
<protein>
    <recommendedName>
        <fullName evidence="1">DNA-directed RNA polymerase subunit beta'</fullName>
        <shortName evidence="1">RNAP subunit beta'</shortName>
        <ecNumber evidence="1">2.7.7.6</ecNumber>
    </recommendedName>
    <alternativeName>
        <fullName evidence="1">RNA polymerase subunit beta'</fullName>
    </alternativeName>
    <alternativeName>
        <fullName evidence="1">Transcriptase subunit beta'</fullName>
    </alternativeName>
</protein>
<reference key="1">
    <citation type="journal article" date="2001" name="Lancet">
        <title>Whole genome sequencing of meticillin-resistant Staphylococcus aureus.</title>
        <authorList>
            <person name="Kuroda M."/>
            <person name="Ohta T."/>
            <person name="Uchiyama I."/>
            <person name="Baba T."/>
            <person name="Yuzawa H."/>
            <person name="Kobayashi I."/>
            <person name="Cui L."/>
            <person name="Oguchi A."/>
            <person name="Aoki K."/>
            <person name="Nagai Y."/>
            <person name="Lian J.-Q."/>
            <person name="Ito T."/>
            <person name="Kanamori M."/>
            <person name="Matsumaru H."/>
            <person name="Maruyama A."/>
            <person name="Murakami H."/>
            <person name="Hosoyama A."/>
            <person name="Mizutani-Ui Y."/>
            <person name="Takahashi N.K."/>
            <person name="Sawano T."/>
            <person name="Inoue R."/>
            <person name="Kaito C."/>
            <person name="Sekimizu K."/>
            <person name="Hirakawa H."/>
            <person name="Kuhara S."/>
            <person name="Goto S."/>
            <person name="Yabuzaki J."/>
            <person name="Kanehisa M."/>
            <person name="Yamashita A."/>
            <person name="Oshima K."/>
            <person name="Furuya K."/>
            <person name="Yoshino C."/>
            <person name="Shiba T."/>
            <person name="Hattori M."/>
            <person name="Ogasawara N."/>
            <person name="Hayashi H."/>
            <person name="Hiramatsu K."/>
        </authorList>
    </citation>
    <scope>NUCLEOTIDE SEQUENCE [LARGE SCALE GENOMIC DNA]</scope>
    <source>
        <strain>N315</strain>
    </source>
</reference>
<reference key="2">
    <citation type="submission" date="2005-11" db="UniProtKB">
        <title>Shotgun proteomic analysis of total protein extract of S. aureus S30 versus N315.</title>
        <authorList>
            <person name="Stenz L."/>
        </authorList>
    </citation>
    <scope>IDENTIFICATION BY MASS SPECTROMETRY</scope>
</reference>
<reference key="3">
    <citation type="submission" date="2007-10" db="UniProtKB">
        <title>Shotgun proteomic analysis of total and membrane protein extracts of S. aureus strain N315.</title>
        <authorList>
            <person name="Vaezzadeh A.R."/>
            <person name="Deshusses J."/>
            <person name="Lescuyer P."/>
            <person name="Hochstrasser D.F."/>
        </authorList>
    </citation>
    <scope>IDENTIFICATION BY MASS SPECTROMETRY [LARGE SCALE ANALYSIS]</scope>
    <source>
        <strain>N315</strain>
    </source>
</reference>
<comment type="function">
    <text evidence="1">DNA-dependent RNA polymerase catalyzes the transcription of DNA into RNA using the four ribonucleoside triphosphates as substrates.</text>
</comment>
<comment type="catalytic activity">
    <reaction evidence="1">
        <text>RNA(n) + a ribonucleoside 5'-triphosphate = RNA(n+1) + diphosphate</text>
        <dbReference type="Rhea" id="RHEA:21248"/>
        <dbReference type="Rhea" id="RHEA-COMP:14527"/>
        <dbReference type="Rhea" id="RHEA-COMP:17342"/>
        <dbReference type="ChEBI" id="CHEBI:33019"/>
        <dbReference type="ChEBI" id="CHEBI:61557"/>
        <dbReference type="ChEBI" id="CHEBI:140395"/>
        <dbReference type="EC" id="2.7.7.6"/>
    </reaction>
</comment>
<comment type="cofactor">
    <cofactor evidence="1">
        <name>Mg(2+)</name>
        <dbReference type="ChEBI" id="CHEBI:18420"/>
    </cofactor>
    <text evidence="1">Binds 1 Mg(2+) ion per subunit.</text>
</comment>
<comment type="cofactor">
    <cofactor evidence="1">
        <name>Zn(2+)</name>
        <dbReference type="ChEBI" id="CHEBI:29105"/>
    </cofactor>
    <text evidence="1">Binds 2 Zn(2+) ions per subunit.</text>
</comment>
<comment type="subunit">
    <text evidence="1">The RNAP catalytic core consists of 2 alpha, 1 beta, 1 beta' and 1 omega subunit. When a sigma factor is associated with the core the holoenzyme is formed, which can initiate transcription.</text>
</comment>
<comment type="similarity">
    <text evidence="1">Belongs to the RNA polymerase beta' chain family.</text>
</comment>